<comment type="catalytic activity">
    <reaction evidence="2">
        <text>gamma-L-glutamyl-L-cysteine + glycine + ATP = glutathione + ADP + phosphate + H(+)</text>
        <dbReference type="Rhea" id="RHEA:13557"/>
        <dbReference type="ChEBI" id="CHEBI:15378"/>
        <dbReference type="ChEBI" id="CHEBI:30616"/>
        <dbReference type="ChEBI" id="CHEBI:43474"/>
        <dbReference type="ChEBI" id="CHEBI:57305"/>
        <dbReference type="ChEBI" id="CHEBI:57925"/>
        <dbReference type="ChEBI" id="CHEBI:58173"/>
        <dbReference type="ChEBI" id="CHEBI:456216"/>
        <dbReference type="EC" id="6.3.2.3"/>
    </reaction>
</comment>
<comment type="cofactor">
    <cofactor evidence="1">
        <name>Mg(2+)</name>
        <dbReference type="ChEBI" id="CHEBI:18420"/>
    </cofactor>
    <cofactor evidence="1">
        <name>Mn(2+)</name>
        <dbReference type="ChEBI" id="CHEBI:29035"/>
    </cofactor>
    <text evidence="1">Binds 1 Mg(2+) or Mn(2+) ion per subunit.</text>
</comment>
<comment type="pathway">
    <text evidence="2">Sulfur metabolism; glutathione biosynthesis; glutathione from L-cysteine and L-glutamate: step 2/2.</text>
</comment>
<comment type="similarity">
    <text evidence="2">Belongs to the prokaryotic GSH synthase family.</text>
</comment>
<comment type="sequence caution" evidence="3">
    <conflict type="erroneous initiation">
        <sequence resource="EMBL-CDS" id="CAE22235"/>
    </conflict>
</comment>
<sequence length="308" mass="33316">MRQLFVLDPLQCIQPAKDSSAALMQAAQRASIEVWACTPADLQARGDQLSAIAVPVVAEPWISTGEPRSLPLTDFACIWMRKDPPVDEGYLYATHLLELAERAGVCVLNRPAALRAWNEKLGALRFNNLMAPTLVASRVSELAAFAREQEEVVLKPLGGRAGQGLVRVAGAAPGLEALLELVTDQEQLPVMVQRFLPAVIEGDKRILLVDGEPLGAVNRRPKAGDFRSNLAMGGRPEPTELDSRELQICAELAPVLREQGLFFVGIDVIDGLLSEINVTSPTGIREVERLKGVPLADQVIARLLVSLG</sequence>
<keyword id="KW-0067">ATP-binding</keyword>
<keyword id="KW-0317">Glutathione biosynthesis</keyword>
<keyword id="KW-0436">Ligase</keyword>
<keyword id="KW-0460">Magnesium</keyword>
<keyword id="KW-0464">Manganese</keyword>
<keyword id="KW-0479">Metal-binding</keyword>
<keyword id="KW-0547">Nucleotide-binding</keyword>
<keyword id="KW-1185">Reference proteome</keyword>
<name>GSHB_PROMM</name>
<protein>
    <recommendedName>
        <fullName evidence="2">Glutathione synthetase</fullName>
        <ecNumber evidence="2">6.3.2.3</ecNumber>
    </recommendedName>
    <alternativeName>
        <fullName evidence="2">GSH synthetase</fullName>
        <shortName evidence="2">GSH-S</shortName>
        <shortName evidence="2">GSHase</shortName>
    </alternativeName>
    <alternativeName>
        <fullName evidence="2">Glutathione synthase</fullName>
    </alternativeName>
</protein>
<gene>
    <name evidence="2" type="primary">gshB</name>
    <name type="ordered locus">PMT_2061</name>
</gene>
<evidence type="ECO:0000250" key="1"/>
<evidence type="ECO:0000255" key="2">
    <source>
        <dbReference type="HAMAP-Rule" id="MF_00162"/>
    </source>
</evidence>
<evidence type="ECO:0000305" key="3"/>
<feature type="chain" id="PRO_0000197474" description="Glutathione synthetase">
    <location>
        <begin position="1"/>
        <end position="308"/>
    </location>
</feature>
<feature type="domain" description="ATP-grasp" evidence="2">
    <location>
        <begin position="120"/>
        <end position="304"/>
    </location>
</feature>
<feature type="binding site" evidence="2">
    <location>
        <begin position="146"/>
        <end position="202"/>
    </location>
    <ligand>
        <name>ATP</name>
        <dbReference type="ChEBI" id="CHEBI:30616"/>
    </ligand>
</feature>
<feature type="binding site" evidence="2">
    <location>
        <position position="275"/>
    </location>
    <ligand>
        <name>Mg(2+)</name>
        <dbReference type="ChEBI" id="CHEBI:18420"/>
    </ligand>
</feature>
<feature type="binding site" evidence="2">
    <location>
        <position position="277"/>
    </location>
    <ligand>
        <name>Mg(2+)</name>
        <dbReference type="ChEBI" id="CHEBI:18420"/>
    </ligand>
</feature>
<proteinExistence type="inferred from homology"/>
<organism>
    <name type="scientific">Prochlorococcus marinus (strain MIT 9313)</name>
    <dbReference type="NCBI Taxonomy" id="74547"/>
    <lineage>
        <taxon>Bacteria</taxon>
        <taxon>Bacillati</taxon>
        <taxon>Cyanobacteriota</taxon>
        <taxon>Cyanophyceae</taxon>
        <taxon>Synechococcales</taxon>
        <taxon>Prochlorococcaceae</taxon>
        <taxon>Prochlorococcus</taxon>
    </lineage>
</organism>
<accession>Q7TUK9</accession>
<reference key="1">
    <citation type="journal article" date="2003" name="Nature">
        <title>Genome divergence in two Prochlorococcus ecotypes reflects oceanic niche differentiation.</title>
        <authorList>
            <person name="Rocap G."/>
            <person name="Larimer F.W."/>
            <person name="Lamerdin J.E."/>
            <person name="Malfatti S."/>
            <person name="Chain P."/>
            <person name="Ahlgren N.A."/>
            <person name="Arellano A."/>
            <person name="Coleman M."/>
            <person name="Hauser L."/>
            <person name="Hess W.R."/>
            <person name="Johnson Z.I."/>
            <person name="Land M.L."/>
            <person name="Lindell D."/>
            <person name="Post A.F."/>
            <person name="Regala W."/>
            <person name="Shah M."/>
            <person name="Shaw S.L."/>
            <person name="Steglich C."/>
            <person name="Sullivan M.B."/>
            <person name="Ting C.S."/>
            <person name="Tolonen A."/>
            <person name="Webb E.A."/>
            <person name="Zinser E.R."/>
            <person name="Chisholm S.W."/>
        </authorList>
    </citation>
    <scope>NUCLEOTIDE SEQUENCE [LARGE SCALE GENOMIC DNA]</scope>
    <source>
        <strain>MIT 9313</strain>
    </source>
</reference>
<dbReference type="EC" id="6.3.2.3" evidence="2"/>
<dbReference type="EMBL" id="BX548175">
    <property type="protein sequence ID" value="CAE22235.1"/>
    <property type="status" value="ALT_INIT"/>
    <property type="molecule type" value="Genomic_DNA"/>
</dbReference>
<dbReference type="RefSeq" id="WP_041385256.1">
    <property type="nucleotide sequence ID" value="NC_005071.1"/>
</dbReference>
<dbReference type="SMR" id="Q7TUK9"/>
<dbReference type="KEGG" id="pmt:PMT_2061"/>
<dbReference type="eggNOG" id="COG0189">
    <property type="taxonomic scope" value="Bacteria"/>
</dbReference>
<dbReference type="HOGENOM" id="CLU_068239_0_0_3"/>
<dbReference type="UniPathway" id="UPA00142">
    <property type="reaction ID" value="UER00210"/>
</dbReference>
<dbReference type="Proteomes" id="UP000001423">
    <property type="component" value="Chromosome"/>
</dbReference>
<dbReference type="GO" id="GO:0005737">
    <property type="term" value="C:cytoplasm"/>
    <property type="evidence" value="ECO:0007669"/>
    <property type="project" value="TreeGrafter"/>
</dbReference>
<dbReference type="GO" id="GO:0005524">
    <property type="term" value="F:ATP binding"/>
    <property type="evidence" value="ECO:0007669"/>
    <property type="project" value="UniProtKB-UniRule"/>
</dbReference>
<dbReference type="GO" id="GO:0004363">
    <property type="term" value="F:glutathione synthase activity"/>
    <property type="evidence" value="ECO:0007669"/>
    <property type="project" value="UniProtKB-UniRule"/>
</dbReference>
<dbReference type="GO" id="GO:0046872">
    <property type="term" value="F:metal ion binding"/>
    <property type="evidence" value="ECO:0007669"/>
    <property type="project" value="UniProtKB-KW"/>
</dbReference>
<dbReference type="Gene3D" id="3.40.50.20">
    <property type="match status" value="1"/>
</dbReference>
<dbReference type="Gene3D" id="3.30.1490.20">
    <property type="entry name" value="ATP-grasp fold, A domain"/>
    <property type="match status" value="1"/>
</dbReference>
<dbReference type="Gene3D" id="3.30.470.20">
    <property type="entry name" value="ATP-grasp fold, B domain"/>
    <property type="match status" value="1"/>
</dbReference>
<dbReference type="HAMAP" id="MF_00162">
    <property type="entry name" value="GSH_S"/>
    <property type="match status" value="1"/>
</dbReference>
<dbReference type="InterPro" id="IPR011761">
    <property type="entry name" value="ATP-grasp"/>
</dbReference>
<dbReference type="InterPro" id="IPR013815">
    <property type="entry name" value="ATP_grasp_subdomain_1"/>
</dbReference>
<dbReference type="InterPro" id="IPR006284">
    <property type="entry name" value="Glut_synth_pro"/>
</dbReference>
<dbReference type="InterPro" id="IPR004218">
    <property type="entry name" value="GSHS_ATP-bd"/>
</dbReference>
<dbReference type="InterPro" id="IPR004215">
    <property type="entry name" value="GSHS_N"/>
</dbReference>
<dbReference type="InterPro" id="IPR016185">
    <property type="entry name" value="PreATP-grasp_dom_sf"/>
</dbReference>
<dbReference type="NCBIfam" id="TIGR01380">
    <property type="entry name" value="glut_syn"/>
    <property type="match status" value="1"/>
</dbReference>
<dbReference type="NCBIfam" id="NF003573">
    <property type="entry name" value="PRK05246.1"/>
    <property type="match status" value="1"/>
</dbReference>
<dbReference type="PANTHER" id="PTHR21621:SF4">
    <property type="entry name" value="GLUTATHIONE SYNTHETASE"/>
    <property type="match status" value="1"/>
</dbReference>
<dbReference type="PANTHER" id="PTHR21621">
    <property type="entry name" value="RIBOSOMAL PROTEIN S6 MODIFICATION PROTEIN"/>
    <property type="match status" value="1"/>
</dbReference>
<dbReference type="Pfam" id="PF02955">
    <property type="entry name" value="GSH-S_ATP"/>
    <property type="match status" value="1"/>
</dbReference>
<dbReference type="Pfam" id="PF02951">
    <property type="entry name" value="GSH-S_N"/>
    <property type="match status" value="1"/>
</dbReference>
<dbReference type="SUPFAM" id="SSF56059">
    <property type="entry name" value="Glutathione synthetase ATP-binding domain-like"/>
    <property type="match status" value="1"/>
</dbReference>
<dbReference type="SUPFAM" id="SSF52440">
    <property type="entry name" value="PreATP-grasp domain"/>
    <property type="match status" value="1"/>
</dbReference>
<dbReference type="PROSITE" id="PS50975">
    <property type="entry name" value="ATP_GRASP"/>
    <property type="match status" value="1"/>
</dbReference>